<comment type="function">
    <text evidence="1">ATP-dependent specificity component of the Clp protease. It directs the protease to specific substrates. Can perform chaperone functions in the absence of ClpP.</text>
</comment>
<comment type="subunit">
    <text evidence="1">Component of the ClpX-ClpP complex. Forms a hexameric ring that, in the presence of ATP, binds to fourteen ClpP subunits assembled into a disk-like structure with a central cavity, resembling the structure of eukaryotic proteasomes.</text>
</comment>
<comment type="similarity">
    <text evidence="1">Belongs to the ClpX chaperone family.</text>
</comment>
<organism>
    <name type="scientific">Pseudomonas syringae pv. tomato (strain ATCC BAA-871 / DC3000)</name>
    <dbReference type="NCBI Taxonomy" id="223283"/>
    <lineage>
        <taxon>Bacteria</taxon>
        <taxon>Pseudomonadati</taxon>
        <taxon>Pseudomonadota</taxon>
        <taxon>Gammaproteobacteria</taxon>
        <taxon>Pseudomonadales</taxon>
        <taxon>Pseudomonadaceae</taxon>
        <taxon>Pseudomonas</taxon>
    </lineage>
</organism>
<name>CLPX_PSESM</name>
<evidence type="ECO:0000255" key="1">
    <source>
        <dbReference type="HAMAP-Rule" id="MF_00175"/>
    </source>
</evidence>
<evidence type="ECO:0000255" key="2">
    <source>
        <dbReference type="PROSITE-ProRule" id="PRU01250"/>
    </source>
</evidence>
<sequence length="427" mass="46928">MTDTRNGEDNGKLLYCSFCGKSQHEVRKLIAGPSVFICDECVDLCNDIIREEVQEAQAESSAHKLPSPKEISGILDQYVIGQERAKKVLAVAVYNHYKRLNQRDKKNDDVELGKSNILLIGPTGSGKTLLAETLARLLNVPFTIADATTLTEAGYVGEDVENIIQKLLQKCDYDVEKAQMGIVYIDEIDKISRKSDNPSITRDVSGEGVQQALLKLIEGTVASVPPQGGRKHPQQEFLQVDTRNILFICGGAFSGLEKVIQNRSTRGGIGFNAEVRSKEEGKKVGESLREVEPDDLVKFGLIPEFVGRLPVLATLDELDEAALIQILTEPKNALTKQYAKLFEMEGVDLEFRTDALKSVARRALERKTGARGLRSILEGVLLDTMYEIPSQSDVSKVVIDESVIDGTSKPLLIYENSEPPAKAAPDA</sequence>
<accession>Q87YR7</accession>
<feature type="chain" id="PRO_0000160406" description="ATP-dependent Clp protease ATP-binding subunit ClpX">
    <location>
        <begin position="1"/>
        <end position="427"/>
    </location>
</feature>
<feature type="domain" description="ClpX-type ZB" evidence="2">
    <location>
        <begin position="4"/>
        <end position="57"/>
    </location>
</feature>
<feature type="binding site" evidence="2">
    <location>
        <position position="16"/>
    </location>
    <ligand>
        <name>Zn(2+)</name>
        <dbReference type="ChEBI" id="CHEBI:29105"/>
    </ligand>
</feature>
<feature type="binding site" evidence="2">
    <location>
        <position position="19"/>
    </location>
    <ligand>
        <name>Zn(2+)</name>
        <dbReference type="ChEBI" id="CHEBI:29105"/>
    </ligand>
</feature>
<feature type="binding site" evidence="2">
    <location>
        <position position="38"/>
    </location>
    <ligand>
        <name>Zn(2+)</name>
        <dbReference type="ChEBI" id="CHEBI:29105"/>
    </ligand>
</feature>
<feature type="binding site" evidence="2">
    <location>
        <position position="41"/>
    </location>
    <ligand>
        <name>Zn(2+)</name>
        <dbReference type="ChEBI" id="CHEBI:29105"/>
    </ligand>
</feature>
<feature type="binding site" evidence="1">
    <location>
        <begin position="122"/>
        <end position="129"/>
    </location>
    <ligand>
        <name>ATP</name>
        <dbReference type="ChEBI" id="CHEBI:30616"/>
    </ligand>
</feature>
<reference key="1">
    <citation type="journal article" date="2003" name="Proc. Natl. Acad. Sci. U.S.A.">
        <title>The complete genome sequence of the Arabidopsis and tomato pathogen Pseudomonas syringae pv. tomato DC3000.</title>
        <authorList>
            <person name="Buell C.R."/>
            <person name="Joardar V."/>
            <person name="Lindeberg M."/>
            <person name="Selengut J."/>
            <person name="Paulsen I.T."/>
            <person name="Gwinn M.L."/>
            <person name="Dodson R.J."/>
            <person name="DeBoy R.T."/>
            <person name="Durkin A.S."/>
            <person name="Kolonay J.F."/>
            <person name="Madupu R."/>
            <person name="Daugherty S.C."/>
            <person name="Brinkac L.M."/>
            <person name="Beanan M.J."/>
            <person name="Haft D.H."/>
            <person name="Nelson W.C."/>
            <person name="Davidsen T.M."/>
            <person name="Zafar N."/>
            <person name="Zhou L."/>
            <person name="Liu J."/>
            <person name="Yuan Q."/>
            <person name="Khouri H.M."/>
            <person name="Fedorova N.B."/>
            <person name="Tran B."/>
            <person name="Russell D."/>
            <person name="Berry K.J."/>
            <person name="Utterback T.R."/>
            <person name="Van Aken S.E."/>
            <person name="Feldblyum T.V."/>
            <person name="D'Ascenzo M."/>
            <person name="Deng W.-L."/>
            <person name="Ramos A.R."/>
            <person name="Alfano J.R."/>
            <person name="Cartinhour S."/>
            <person name="Chatterjee A.K."/>
            <person name="Delaney T.P."/>
            <person name="Lazarowitz S.G."/>
            <person name="Martin G.B."/>
            <person name="Schneider D.J."/>
            <person name="Tang X."/>
            <person name="Bender C.L."/>
            <person name="White O."/>
            <person name="Fraser C.M."/>
            <person name="Collmer A."/>
        </authorList>
    </citation>
    <scope>NUCLEOTIDE SEQUENCE [LARGE SCALE GENOMIC DNA]</scope>
    <source>
        <strain>ATCC BAA-871 / DC3000</strain>
    </source>
</reference>
<keyword id="KW-0067">ATP-binding</keyword>
<keyword id="KW-0143">Chaperone</keyword>
<keyword id="KW-0479">Metal-binding</keyword>
<keyword id="KW-0547">Nucleotide-binding</keyword>
<keyword id="KW-1185">Reference proteome</keyword>
<keyword id="KW-0862">Zinc</keyword>
<proteinExistence type="inferred from homology"/>
<dbReference type="EMBL" id="AE016853">
    <property type="protein sequence ID" value="AAO57194.1"/>
    <property type="molecule type" value="Genomic_DNA"/>
</dbReference>
<dbReference type="RefSeq" id="NP_793499.1">
    <property type="nucleotide sequence ID" value="NC_004578.1"/>
</dbReference>
<dbReference type="RefSeq" id="WP_005770751.1">
    <property type="nucleotide sequence ID" value="NC_004578.1"/>
</dbReference>
<dbReference type="SMR" id="Q87YR7"/>
<dbReference type="STRING" id="223283.PSPTO_3725"/>
<dbReference type="GeneID" id="61790429"/>
<dbReference type="KEGG" id="pst:PSPTO_3725"/>
<dbReference type="PATRIC" id="fig|223283.9.peg.3817"/>
<dbReference type="eggNOG" id="COG1219">
    <property type="taxonomic scope" value="Bacteria"/>
</dbReference>
<dbReference type="HOGENOM" id="CLU_014218_8_2_6"/>
<dbReference type="OrthoDB" id="9804062at2"/>
<dbReference type="PhylomeDB" id="Q87YR7"/>
<dbReference type="Proteomes" id="UP000002515">
    <property type="component" value="Chromosome"/>
</dbReference>
<dbReference type="GO" id="GO:0009376">
    <property type="term" value="C:HslUV protease complex"/>
    <property type="evidence" value="ECO:0007669"/>
    <property type="project" value="TreeGrafter"/>
</dbReference>
<dbReference type="GO" id="GO:0005524">
    <property type="term" value="F:ATP binding"/>
    <property type="evidence" value="ECO:0007669"/>
    <property type="project" value="UniProtKB-UniRule"/>
</dbReference>
<dbReference type="GO" id="GO:0016887">
    <property type="term" value="F:ATP hydrolysis activity"/>
    <property type="evidence" value="ECO:0007669"/>
    <property type="project" value="InterPro"/>
</dbReference>
<dbReference type="GO" id="GO:0140662">
    <property type="term" value="F:ATP-dependent protein folding chaperone"/>
    <property type="evidence" value="ECO:0007669"/>
    <property type="project" value="InterPro"/>
</dbReference>
<dbReference type="GO" id="GO:0046983">
    <property type="term" value="F:protein dimerization activity"/>
    <property type="evidence" value="ECO:0007669"/>
    <property type="project" value="InterPro"/>
</dbReference>
<dbReference type="GO" id="GO:0051082">
    <property type="term" value="F:unfolded protein binding"/>
    <property type="evidence" value="ECO:0007669"/>
    <property type="project" value="UniProtKB-UniRule"/>
</dbReference>
<dbReference type="GO" id="GO:0008270">
    <property type="term" value="F:zinc ion binding"/>
    <property type="evidence" value="ECO:0007669"/>
    <property type="project" value="InterPro"/>
</dbReference>
<dbReference type="GO" id="GO:0051301">
    <property type="term" value="P:cell division"/>
    <property type="evidence" value="ECO:0007669"/>
    <property type="project" value="TreeGrafter"/>
</dbReference>
<dbReference type="GO" id="GO:0051603">
    <property type="term" value="P:proteolysis involved in protein catabolic process"/>
    <property type="evidence" value="ECO:0007669"/>
    <property type="project" value="TreeGrafter"/>
</dbReference>
<dbReference type="CDD" id="cd19497">
    <property type="entry name" value="RecA-like_ClpX"/>
    <property type="match status" value="1"/>
</dbReference>
<dbReference type="FunFam" id="1.10.8.60:FF:000002">
    <property type="entry name" value="ATP-dependent Clp protease ATP-binding subunit ClpX"/>
    <property type="match status" value="1"/>
</dbReference>
<dbReference type="FunFam" id="3.40.50.300:FF:000005">
    <property type="entry name" value="ATP-dependent Clp protease ATP-binding subunit ClpX"/>
    <property type="match status" value="1"/>
</dbReference>
<dbReference type="Gene3D" id="1.10.8.60">
    <property type="match status" value="1"/>
</dbReference>
<dbReference type="Gene3D" id="6.20.220.10">
    <property type="entry name" value="ClpX chaperone, C4-type zinc finger domain"/>
    <property type="match status" value="1"/>
</dbReference>
<dbReference type="Gene3D" id="3.40.50.300">
    <property type="entry name" value="P-loop containing nucleotide triphosphate hydrolases"/>
    <property type="match status" value="1"/>
</dbReference>
<dbReference type="HAMAP" id="MF_00175">
    <property type="entry name" value="ClpX"/>
    <property type="match status" value="1"/>
</dbReference>
<dbReference type="InterPro" id="IPR003593">
    <property type="entry name" value="AAA+_ATPase"/>
</dbReference>
<dbReference type="InterPro" id="IPR050052">
    <property type="entry name" value="ATP-dep_Clp_protease_ClpX"/>
</dbReference>
<dbReference type="InterPro" id="IPR003959">
    <property type="entry name" value="ATPase_AAA_core"/>
</dbReference>
<dbReference type="InterPro" id="IPR019489">
    <property type="entry name" value="Clp_ATPase_C"/>
</dbReference>
<dbReference type="InterPro" id="IPR004487">
    <property type="entry name" value="Clp_protease_ATP-bd_su_ClpX"/>
</dbReference>
<dbReference type="InterPro" id="IPR046425">
    <property type="entry name" value="ClpX_bact"/>
</dbReference>
<dbReference type="InterPro" id="IPR027417">
    <property type="entry name" value="P-loop_NTPase"/>
</dbReference>
<dbReference type="InterPro" id="IPR010603">
    <property type="entry name" value="Znf_CppX_C4"/>
</dbReference>
<dbReference type="InterPro" id="IPR038366">
    <property type="entry name" value="Znf_CppX_C4_sf"/>
</dbReference>
<dbReference type="NCBIfam" id="TIGR00382">
    <property type="entry name" value="clpX"/>
    <property type="match status" value="1"/>
</dbReference>
<dbReference type="NCBIfam" id="NF003745">
    <property type="entry name" value="PRK05342.1"/>
    <property type="match status" value="1"/>
</dbReference>
<dbReference type="PANTHER" id="PTHR48102:SF7">
    <property type="entry name" value="ATP-DEPENDENT CLP PROTEASE ATP-BINDING SUBUNIT CLPX-LIKE, MITOCHONDRIAL"/>
    <property type="match status" value="1"/>
</dbReference>
<dbReference type="PANTHER" id="PTHR48102">
    <property type="entry name" value="ATP-DEPENDENT CLP PROTEASE ATP-BINDING SUBUNIT CLPX-LIKE, MITOCHONDRIAL-RELATED"/>
    <property type="match status" value="1"/>
</dbReference>
<dbReference type="Pfam" id="PF07724">
    <property type="entry name" value="AAA_2"/>
    <property type="match status" value="1"/>
</dbReference>
<dbReference type="Pfam" id="PF10431">
    <property type="entry name" value="ClpB_D2-small"/>
    <property type="match status" value="1"/>
</dbReference>
<dbReference type="Pfam" id="PF06689">
    <property type="entry name" value="zf-C4_ClpX"/>
    <property type="match status" value="1"/>
</dbReference>
<dbReference type="SMART" id="SM00382">
    <property type="entry name" value="AAA"/>
    <property type="match status" value="1"/>
</dbReference>
<dbReference type="SMART" id="SM01086">
    <property type="entry name" value="ClpB_D2-small"/>
    <property type="match status" value="1"/>
</dbReference>
<dbReference type="SMART" id="SM00994">
    <property type="entry name" value="zf-C4_ClpX"/>
    <property type="match status" value="1"/>
</dbReference>
<dbReference type="SUPFAM" id="SSF57716">
    <property type="entry name" value="Glucocorticoid receptor-like (DNA-binding domain)"/>
    <property type="match status" value="1"/>
</dbReference>
<dbReference type="SUPFAM" id="SSF52540">
    <property type="entry name" value="P-loop containing nucleoside triphosphate hydrolases"/>
    <property type="match status" value="1"/>
</dbReference>
<dbReference type="PROSITE" id="PS51902">
    <property type="entry name" value="CLPX_ZB"/>
    <property type="match status" value="1"/>
</dbReference>
<protein>
    <recommendedName>
        <fullName evidence="1">ATP-dependent Clp protease ATP-binding subunit ClpX</fullName>
    </recommendedName>
</protein>
<gene>
    <name evidence="1" type="primary">clpX</name>
    <name type="ordered locus">PSPTO_3725</name>
</gene>